<dbReference type="EC" id="3.6.4.-" evidence="1"/>
<dbReference type="EMBL" id="CP001108">
    <property type="protein sequence ID" value="ACF45578.1"/>
    <property type="molecule type" value="Genomic_DNA"/>
</dbReference>
<dbReference type="RefSeq" id="WP_012505115.1">
    <property type="nucleotide sequence ID" value="NC_011059.1"/>
</dbReference>
<dbReference type="SMR" id="B4S5I1"/>
<dbReference type="STRING" id="290512.Paes_0522"/>
<dbReference type="KEGG" id="paa:Paes_0522"/>
<dbReference type="eggNOG" id="COG2255">
    <property type="taxonomic scope" value="Bacteria"/>
</dbReference>
<dbReference type="HOGENOM" id="CLU_055599_1_0_10"/>
<dbReference type="Proteomes" id="UP000002725">
    <property type="component" value="Chromosome"/>
</dbReference>
<dbReference type="GO" id="GO:0005737">
    <property type="term" value="C:cytoplasm"/>
    <property type="evidence" value="ECO:0007669"/>
    <property type="project" value="UniProtKB-SubCell"/>
</dbReference>
<dbReference type="GO" id="GO:0048476">
    <property type="term" value="C:Holliday junction resolvase complex"/>
    <property type="evidence" value="ECO:0007669"/>
    <property type="project" value="UniProtKB-UniRule"/>
</dbReference>
<dbReference type="GO" id="GO:0005524">
    <property type="term" value="F:ATP binding"/>
    <property type="evidence" value="ECO:0007669"/>
    <property type="project" value="UniProtKB-UniRule"/>
</dbReference>
<dbReference type="GO" id="GO:0016887">
    <property type="term" value="F:ATP hydrolysis activity"/>
    <property type="evidence" value="ECO:0007669"/>
    <property type="project" value="InterPro"/>
</dbReference>
<dbReference type="GO" id="GO:0000400">
    <property type="term" value="F:four-way junction DNA binding"/>
    <property type="evidence" value="ECO:0007669"/>
    <property type="project" value="UniProtKB-UniRule"/>
</dbReference>
<dbReference type="GO" id="GO:0009378">
    <property type="term" value="F:four-way junction helicase activity"/>
    <property type="evidence" value="ECO:0007669"/>
    <property type="project" value="InterPro"/>
</dbReference>
<dbReference type="GO" id="GO:0006310">
    <property type="term" value="P:DNA recombination"/>
    <property type="evidence" value="ECO:0007669"/>
    <property type="project" value="UniProtKB-UniRule"/>
</dbReference>
<dbReference type="GO" id="GO:0006281">
    <property type="term" value="P:DNA repair"/>
    <property type="evidence" value="ECO:0007669"/>
    <property type="project" value="UniProtKB-UniRule"/>
</dbReference>
<dbReference type="CDD" id="cd00009">
    <property type="entry name" value="AAA"/>
    <property type="match status" value="1"/>
</dbReference>
<dbReference type="Gene3D" id="1.10.8.60">
    <property type="match status" value="1"/>
</dbReference>
<dbReference type="Gene3D" id="3.40.50.300">
    <property type="entry name" value="P-loop containing nucleotide triphosphate hydrolases"/>
    <property type="match status" value="1"/>
</dbReference>
<dbReference type="Gene3D" id="1.10.10.10">
    <property type="entry name" value="Winged helix-like DNA-binding domain superfamily/Winged helix DNA-binding domain"/>
    <property type="match status" value="1"/>
</dbReference>
<dbReference type="HAMAP" id="MF_00016">
    <property type="entry name" value="DNA_HJ_migration_RuvB"/>
    <property type="match status" value="1"/>
</dbReference>
<dbReference type="InterPro" id="IPR003593">
    <property type="entry name" value="AAA+_ATPase"/>
</dbReference>
<dbReference type="InterPro" id="IPR041445">
    <property type="entry name" value="AAA_lid_4"/>
</dbReference>
<dbReference type="InterPro" id="IPR004605">
    <property type="entry name" value="DNA_helicase_Holl-junc_RuvB"/>
</dbReference>
<dbReference type="InterPro" id="IPR027417">
    <property type="entry name" value="P-loop_NTPase"/>
</dbReference>
<dbReference type="InterPro" id="IPR008824">
    <property type="entry name" value="RuvB-like_N"/>
</dbReference>
<dbReference type="InterPro" id="IPR008823">
    <property type="entry name" value="RuvB_C"/>
</dbReference>
<dbReference type="InterPro" id="IPR036388">
    <property type="entry name" value="WH-like_DNA-bd_sf"/>
</dbReference>
<dbReference type="InterPro" id="IPR036390">
    <property type="entry name" value="WH_DNA-bd_sf"/>
</dbReference>
<dbReference type="NCBIfam" id="NF000868">
    <property type="entry name" value="PRK00080.1"/>
    <property type="match status" value="1"/>
</dbReference>
<dbReference type="NCBIfam" id="TIGR00635">
    <property type="entry name" value="ruvB"/>
    <property type="match status" value="1"/>
</dbReference>
<dbReference type="PANTHER" id="PTHR42848">
    <property type="match status" value="1"/>
</dbReference>
<dbReference type="PANTHER" id="PTHR42848:SF1">
    <property type="entry name" value="HOLLIDAY JUNCTION BRANCH MIGRATION COMPLEX SUBUNIT RUVB"/>
    <property type="match status" value="1"/>
</dbReference>
<dbReference type="Pfam" id="PF17864">
    <property type="entry name" value="AAA_lid_4"/>
    <property type="match status" value="1"/>
</dbReference>
<dbReference type="Pfam" id="PF05491">
    <property type="entry name" value="RuvB_C"/>
    <property type="match status" value="1"/>
</dbReference>
<dbReference type="Pfam" id="PF05496">
    <property type="entry name" value="RuvB_N"/>
    <property type="match status" value="1"/>
</dbReference>
<dbReference type="SMART" id="SM00382">
    <property type="entry name" value="AAA"/>
    <property type="match status" value="1"/>
</dbReference>
<dbReference type="SUPFAM" id="SSF52540">
    <property type="entry name" value="P-loop containing nucleoside triphosphate hydrolases"/>
    <property type="match status" value="1"/>
</dbReference>
<dbReference type="SUPFAM" id="SSF46785">
    <property type="entry name" value="Winged helix' DNA-binding domain"/>
    <property type="match status" value="1"/>
</dbReference>
<comment type="function">
    <text evidence="1">The RuvA-RuvB-RuvC complex processes Holliday junction (HJ) DNA during genetic recombination and DNA repair, while the RuvA-RuvB complex plays an important role in the rescue of blocked DNA replication forks via replication fork reversal (RFR). RuvA specifically binds to HJ cruciform DNA, conferring on it an open structure. The RuvB hexamer acts as an ATP-dependent pump, pulling dsDNA into and through the RuvAB complex. RuvB forms 2 homohexamers on either side of HJ DNA bound by 1 or 2 RuvA tetramers; 4 subunits per hexamer contact DNA at a time. Coordinated motions by a converter formed by DNA-disengaged RuvB subunits stimulates ATP hydrolysis and nucleotide exchange. Immobilization of the converter enables RuvB to convert the ATP-contained energy into a lever motion, pulling 2 nucleotides of DNA out of the RuvA tetramer per ATP hydrolyzed, thus driving DNA branch migration. The RuvB motors rotate together with the DNA substrate, which together with the progressing nucleotide cycle form the mechanistic basis for DNA recombination by continuous HJ branch migration. Branch migration allows RuvC to scan DNA until it finds its consensus sequence, where it cleaves and resolves cruciform DNA.</text>
</comment>
<comment type="catalytic activity">
    <reaction evidence="1">
        <text>ATP + H2O = ADP + phosphate + H(+)</text>
        <dbReference type="Rhea" id="RHEA:13065"/>
        <dbReference type="ChEBI" id="CHEBI:15377"/>
        <dbReference type="ChEBI" id="CHEBI:15378"/>
        <dbReference type="ChEBI" id="CHEBI:30616"/>
        <dbReference type="ChEBI" id="CHEBI:43474"/>
        <dbReference type="ChEBI" id="CHEBI:456216"/>
    </reaction>
</comment>
<comment type="subunit">
    <text evidence="1">Homohexamer. Forms an RuvA(8)-RuvB(12)-Holliday junction (HJ) complex. HJ DNA is sandwiched between 2 RuvA tetramers; dsDNA enters through RuvA and exits via RuvB. An RuvB hexamer assembles on each DNA strand where it exits the tetramer. Each RuvB hexamer is contacted by two RuvA subunits (via domain III) on 2 adjacent RuvB subunits; this complex drives branch migration. In the full resolvosome a probable DNA-RuvA(4)-RuvB(12)-RuvC(2) complex forms which resolves the HJ.</text>
</comment>
<comment type="subcellular location">
    <subcellularLocation>
        <location evidence="1">Cytoplasm</location>
    </subcellularLocation>
</comment>
<comment type="domain">
    <text evidence="1">Has 3 domains, the large (RuvB-L) and small ATPase (RuvB-S) domains and the C-terminal head (RuvB-H) domain. The head domain binds DNA, while the ATPase domains jointly bind ATP, ADP or are empty depending on the state of the subunit in the translocation cycle. During a single DNA translocation step the structure of each domain remains the same, but their relative positions change.</text>
</comment>
<comment type="similarity">
    <text evidence="1">Belongs to the RuvB family.</text>
</comment>
<evidence type="ECO:0000255" key="1">
    <source>
        <dbReference type="HAMAP-Rule" id="MF_00016"/>
    </source>
</evidence>
<gene>
    <name evidence="1" type="primary">ruvB</name>
    <name type="ordered locus">Paes_0522</name>
</gene>
<organism>
    <name type="scientific">Prosthecochloris aestuarii (strain DSM 271 / SK 413)</name>
    <dbReference type="NCBI Taxonomy" id="290512"/>
    <lineage>
        <taxon>Bacteria</taxon>
        <taxon>Pseudomonadati</taxon>
        <taxon>Chlorobiota</taxon>
        <taxon>Chlorobiia</taxon>
        <taxon>Chlorobiales</taxon>
        <taxon>Chlorobiaceae</taxon>
        <taxon>Prosthecochloris</taxon>
    </lineage>
</organism>
<reference key="1">
    <citation type="submission" date="2008-06" db="EMBL/GenBank/DDBJ databases">
        <title>Complete sequence of chromosome of Prosthecochloris aestuarii DSM 271.</title>
        <authorList>
            <consortium name="US DOE Joint Genome Institute"/>
            <person name="Lucas S."/>
            <person name="Copeland A."/>
            <person name="Lapidus A."/>
            <person name="Glavina del Rio T."/>
            <person name="Dalin E."/>
            <person name="Tice H."/>
            <person name="Bruce D."/>
            <person name="Goodwin L."/>
            <person name="Pitluck S."/>
            <person name="Schmutz J."/>
            <person name="Larimer F."/>
            <person name="Land M."/>
            <person name="Hauser L."/>
            <person name="Kyrpides N."/>
            <person name="Anderson I."/>
            <person name="Liu Z."/>
            <person name="Li T."/>
            <person name="Zhao F."/>
            <person name="Overmann J."/>
            <person name="Bryant D.A."/>
            <person name="Richardson P."/>
        </authorList>
    </citation>
    <scope>NUCLEOTIDE SEQUENCE [LARGE SCALE GENOMIC DNA]</scope>
    <source>
        <strain>DSM 271 / SK 413</strain>
    </source>
</reference>
<feature type="chain" id="PRO_1000089663" description="Holliday junction branch migration complex subunit RuvB">
    <location>
        <begin position="1"/>
        <end position="343"/>
    </location>
</feature>
<feature type="region of interest" description="Large ATPase domain (RuvB-L)" evidence="1">
    <location>
        <begin position="1"/>
        <end position="182"/>
    </location>
</feature>
<feature type="region of interest" description="Small ATPAse domain (RuvB-S)" evidence="1">
    <location>
        <begin position="183"/>
        <end position="253"/>
    </location>
</feature>
<feature type="region of interest" description="Head domain (RuvB-H)" evidence="1">
    <location>
        <begin position="256"/>
        <end position="343"/>
    </location>
</feature>
<feature type="binding site" evidence="1">
    <location>
        <position position="21"/>
    </location>
    <ligand>
        <name>ATP</name>
        <dbReference type="ChEBI" id="CHEBI:30616"/>
    </ligand>
</feature>
<feature type="binding site" evidence="1">
    <location>
        <position position="22"/>
    </location>
    <ligand>
        <name>ATP</name>
        <dbReference type="ChEBI" id="CHEBI:30616"/>
    </ligand>
</feature>
<feature type="binding site" evidence="1">
    <location>
        <position position="63"/>
    </location>
    <ligand>
        <name>ATP</name>
        <dbReference type="ChEBI" id="CHEBI:30616"/>
    </ligand>
</feature>
<feature type="binding site" evidence="1">
    <location>
        <position position="66"/>
    </location>
    <ligand>
        <name>ATP</name>
        <dbReference type="ChEBI" id="CHEBI:30616"/>
    </ligand>
</feature>
<feature type="binding site" evidence="1">
    <location>
        <position position="67"/>
    </location>
    <ligand>
        <name>ATP</name>
        <dbReference type="ChEBI" id="CHEBI:30616"/>
    </ligand>
</feature>
<feature type="binding site" evidence="1">
    <location>
        <position position="67"/>
    </location>
    <ligand>
        <name>Mg(2+)</name>
        <dbReference type="ChEBI" id="CHEBI:18420"/>
    </ligand>
</feature>
<feature type="binding site" evidence="1">
    <location>
        <position position="68"/>
    </location>
    <ligand>
        <name>ATP</name>
        <dbReference type="ChEBI" id="CHEBI:30616"/>
    </ligand>
</feature>
<feature type="binding site" evidence="1">
    <location>
        <begin position="129"/>
        <end position="131"/>
    </location>
    <ligand>
        <name>ATP</name>
        <dbReference type="ChEBI" id="CHEBI:30616"/>
    </ligand>
</feature>
<feature type="binding site" evidence="1">
    <location>
        <position position="172"/>
    </location>
    <ligand>
        <name>ATP</name>
        <dbReference type="ChEBI" id="CHEBI:30616"/>
    </ligand>
</feature>
<feature type="binding site" evidence="1">
    <location>
        <position position="182"/>
    </location>
    <ligand>
        <name>ATP</name>
        <dbReference type="ChEBI" id="CHEBI:30616"/>
    </ligand>
</feature>
<feature type="binding site" evidence="1">
    <location>
        <position position="219"/>
    </location>
    <ligand>
        <name>ATP</name>
        <dbReference type="ChEBI" id="CHEBI:30616"/>
    </ligand>
</feature>
<feature type="binding site" evidence="1">
    <location>
        <position position="311"/>
    </location>
    <ligand>
        <name>DNA</name>
        <dbReference type="ChEBI" id="CHEBI:16991"/>
    </ligand>
</feature>
<feature type="binding site" evidence="1">
    <location>
        <position position="316"/>
    </location>
    <ligand>
        <name>DNA</name>
        <dbReference type="ChEBI" id="CHEBI:16991"/>
    </ligand>
</feature>
<name>RUVB_PROA2</name>
<proteinExistence type="inferred from homology"/>
<keyword id="KW-0067">ATP-binding</keyword>
<keyword id="KW-0963">Cytoplasm</keyword>
<keyword id="KW-0227">DNA damage</keyword>
<keyword id="KW-0233">DNA recombination</keyword>
<keyword id="KW-0234">DNA repair</keyword>
<keyword id="KW-0238">DNA-binding</keyword>
<keyword id="KW-0378">Hydrolase</keyword>
<keyword id="KW-0547">Nucleotide-binding</keyword>
<sequence length="343" mass="37690">MRDELLNTPTDPLEEKFEEQIRPSRLEDFSGQQRLTDNLRIFIAAARQRGEALDHVLFSGPPGLGKTTLAHIIASELGGGLKITSGPLLDKPGNLAGLLTSLQKGDVLFIDEIHRLTPAVEEYLYSAMEDFRIDILLDSGPSARSVQLRLEPFTLVGATTRAGLLTSPLRARFGISNRLDYYSAELLQRIIIRTATILGIAIDQQAADEIARRSRGTPRIANRLLKRARDFTQVAQSSVISLELARKTLAALEIDEDGLDDMDKKIILSLLQKFDGGPVGISSLAVSVGEEHDTIEEVYEPYLIQTGFIARTPRGRVATKNAYRKFLGVLPGDDGPLFQKGSS</sequence>
<accession>B4S5I1</accession>
<protein>
    <recommendedName>
        <fullName evidence="1">Holliday junction branch migration complex subunit RuvB</fullName>
        <ecNumber evidence="1">3.6.4.-</ecNumber>
    </recommendedName>
</protein>